<accession>A0KJ50</accession>
<gene>
    <name evidence="1" type="primary">mltF</name>
    <name type="ordered locus">AHA_1765</name>
</gene>
<feature type="signal peptide" evidence="1">
    <location>
        <begin position="1"/>
        <end position="31"/>
    </location>
</feature>
<feature type="chain" id="PRO_0000353917" description="Membrane-bound lytic murein transglycosylase F">
    <location>
        <begin position="32"/>
        <end position="496"/>
    </location>
</feature>
<feature type="region of interest" description="Non-LT domain" evidence="1">
    <location>
        <begin position="32"/>
        <end position="271"/>
    </location>
</feature>
<feature type="region of interest" description="LT domain" evidence="1">
    <location>
        <begin position="273"/>
        <end position="496"/>
    </location>
</feature>
<feature type="region of interest" description="Disordered" evidence="2">
    <location>
        <begin position="464"/>
        <end position="486"/>
    </location>
</feature>
<feature type="active site" evidence="1">
    <location>
        <position position="316"/>
    </location>
</feature>
<evidence type="ECO:0000255" key="1">
    <source>
        <dbReference type="HAMAP-Rule" id="MF_02016"/>
    </source>
</evidence>
<evidence type="ECO:0000256" key="2">
    <source>
        <dbReference type="SAM" id="MobiDB-lite"/>
    </source>
</evidence>
<dbReference type="EC" id="4.2.2.n1" evidence="1"/>
<dbReference type="EMBL" id="CP000462">
    <property type="protein sequence ID" value="ABK38788.1"/>
    <property type="molecule type" value="Genomic_DNA"/>
</dbReference>
<dbReference type="RefSeq" id="WP_011705651.1">
    <property type="nucleotide sequence ID" value="NC_008570.1"/>
</dbReference>
<dbReference type="RefSeq" id="YP_856301.1">
    <property type="nucleotide sequence ID" value="NC_008570.1"/>
</dbReference>
<dbReference type="SMR" id="A0KJ50"/>
<dbReference type="STRING" id="380703.AHA_1765"/>
<dbReference type="CAZy" id="GH23">
    <property type="family name" value="Glycoside Hydrolase Family 23"/>
</dbReference>
<dbReference type="EnsemblBacteria" id="ABK38788">
    <property type="protein sequence ID" value="ABK38788"/>
    <property type="gene ID" value="AHA_1765"/>
</dbReference>
<dbReference type="GeneID" id="4490295"/>
<dbReference type="KEGG" id="aha:AHA_1765"/>
<dbReference type="PATRIC" id="fig|380703.7.peg.1781"/>
<dbReference type="eggNOG" id="COG4623">
    <property type="taxonomic scope" value="Bacteria"/>
</dbReference>
<dbReference type="HOGENOM" id="CLU_027494_0_1_6"/>
<dbReference type="OrthoDB" id="9815002at2"/>
<dbReference type="Proteomes" id="UP000000756">
    <property type="component" value="Chromosome"/>
</dbReference>
<dbReference type="GO" id="GO:0009279">
    <property type="term" value="C:cell outer membrane"/>
    <property type="evidence" value="ECO:0007669"/>
    <property type="project" value="UniProtKB-SubCell"/>
</dbReference>
<dbReference type="GO" id="GO:0008933">
    <property type="term" value="F:peptidoglycan lytic transglycosylase activity"/>
    <property type="evidence" value="ECO:0007669"/>
    <property type="project" value="UniProtKB-UniRule"/>
</dbReference>
<dbReference type="GO" id="GO:0016998">
    <property type="term" value="P:cell wall macromolecule catabolic process"/>
    <property type="evidence" value="ECO:0007669"/>
    <property type="project" value="UniProtKB-UniRule"/>
</dbReference>
<dbReference type="GO" id="GO:0071555">
    <property type="term" value="P:cell wall organization"/>
    <property type="evidence" value="ECO:0007669"/>
    <property type="project" value="UniProtKB-KW"/>
</dbReference>
<dbReference type="GO" id="GO:0009253">
    <property type="term" value="P:peptidoglycan catabolic process"/>
    <property type="evidence" value="ECO:0007669"/>
    <property type="project" value="TreeGrafter"/>
</dbReference>
<dbReference type="CDD" id="cd13403">
    <property type="entry name" value="MLTF-like"/>
    <property type="match status" value="1"/>
</dbReference>
<dbReference type="CDD" id="cd01009">
    <property type="entry name" value="PBP2_YfhD_N"/>
    <property type="match status" value="1"/>
</dbReference>
<dbReference type="FunFam" id="1.10.530.10:FF:000003">
    <property type="entry name" value="Membrane-bound lytic murein transglycosylase F"/>
    <property type="match status" value="1"/>
</dbReference>
<dbReference type="Gene3D" id="1.10.530.10">
    <property type="match status" value="1"/>
</dbReference>
<dbReference type="Gene3D" id="3.40.190.10">
    <property type="entry name" value="Periplasmic binding protein-like II"/>
    <property type="match status" value="2"/>
</dbReference>
<dbReference type="HAMAP" id="MF_02016">
    <property type="entry name" value="MltF"/>
    <property type="match status" value="1"/>
</dbReference>
<dbReference type="InterPro" id="IPR023346">
    <property type="entry name" value="Lysozyme-like_dom_sf"/>
</dbReference>
<dbReference type="InterPro" id="IPR023703">
    <property type="entry name" value="MltF"/>
</dbReference>
<dbReference type="InterPro" id="IPR001638">
    <property type="entry name" value="Solute-binding_3/MltF_N"/>
</dbReference>
<dbReference type="InterPro" id="IPR000189">
    <property type="entry name" value="Transglyc_AS"/>
</dbReference>
<dbReference type="InterPro" id="IPR008258">
    <property type="entry name" value="Transglycosylase_SLT_dom_1"/>
</dbReference>
<dbReference type="NCBIfam" id="NF008112">
    <property type="entry name" value="PRK10859.1"/>
    <property type="match status" value="1"/>
</dbReference>
<dbReference type="PANTHER" id="PTHR35936">
    <property type="entry name" value="MEMBRANE-BOUND LYTIC MUREIN TRANSGLYCOSYLASE F"/>
    <property type="match status" value="1"/>
</dbReference>
<dbReference type="PANTHER" id="PTHR35936:SF32">
    <property type="entry name" value="MEMBRANE-BOUND LYTIC MUREIN TRANSGLYCOSYLASE F"/>
    <property type="match status" value="1"/>
</dbReference>
<dbReference type="Pfam" id="PF00497">
    <property type="entry name" value="SBP_bac_3"/>
    <property type="match status" value="1"/>
</dbReference>
<dbReference type="Pfam" id="PF01464">
    <property type="entry name" value="SLT"/>
    <property type="match status" value="1"/>
</dbReference>
<dbReference type="SMART" id="SM00062">
    <property type="entry name" value="PBPb"/>
    <property type="match status" value="1"/>
</dbReference>
<dbReference type="SUPFAM" id="SSF53955">
    <property type="entry name" value="Lysozyme-like"/>
    <property type="match status" value="1"/>
</dbReference>
<dbReference type="SUPFAM" id="SSF53850">
    <property type="entry name" value="Periplasmic binding protein-like II"/>
    <property type="match status" value="1"/>
</dbReference>
<dbReference type="PROSITE" id="PS51257">
    <property type="entry name" value="PROKAR_LIPOPROTEIN"/>
    <property type="match status" value="1"/>
</dbReference>
<dbReference type="PROSITE" id="PS00922">
    <property type="entry name" value="TRANSGLYCOSYLASE"/>
    <property type="match status" value="1"/>
</dbReference>
<reference key="1">
    <citation type="journal article" date="2006" name="J. Bacteriol.">
        <title>Genome sequence of Aeromonas hydrophila ATCC 7966T: jack of all trades.</title>
        <authorList>
            <person name="Seshadri R."/>
            <person name="Joseph S.W."/>
            <person name="Chopra A.K."/>
            <person name="Sha J."/>
            <person name="Shaw J."/>
            <person name="Graf J."/>
            <person name="Haft D.H."/>
            <person name="Wu M."/>
            <person name="Ren Q."/>
            <person name="Rosovitz M.J."/>
            <person name="Madupu R."/>
            <person name="Tallon L."/>
            <person name="Kim M."/>
            <person name="Jin S."/>
            <person name="Vuong H."/>
            <person name="Stine O.C."/>
            <person name="Ali A."/>
            <person name="Horneman A.J."/>
            <person name="Heidelberg J.F."/>
        </authorList>
    </citation>
    <scope>NUCLEOTIDE SEQUENCE [LARGE SCALE GENOMIC DNA]</scope>
    <source>
        <strain>ATCC 7966 / DSM 30187 / BCRC 13018 / CCUG 14551 / JCM 1027 / KCTC 2358 / NCIMB 9240 / NCTC 8049</strain>
    </source>
</reference>
<name>MLTF_AERHH</name>
<proteinExistence type="inferred from homology"/>
<organism>
    <name type="scientific">Aeromonas hydrophila subsp. hydrophila (strain ATCC 7966 / DSM 30187 / BCRC 13018 / CCUG 14551 / JCM 1027 / KCTC 2358 / NCIMB 9240 / NCTC 8049)</name>
    <dbReference type="NCBI Taxonomy" id="380703"/>
    <lineage>
        <taxon>Bacteria</taxon>
        <taxon>Pseudomonadati</taxon>
        <taxon>Pseudomonadota</taxon>
        <taxon>Gammaproteobacteria</taxon>
        <taxon>Aeromonadales</taxon>
        <taxon>Aeromonadaceae</taxon>
        <taxon>Aeromonas</taxon>
    </lineage>
</organism>
<comment type="function">
    <text evidence="1">Murein-degrading enzyme that degrades murein glycan strands and insoluble, high-molecular weight murein sacculi, with the concomitant formation of a 1,6-anhydromuramoyl product. Lytic transglycosylases (LTs) play an integral role in the metabolism of the peptidoglycan (PG) sacculus. Their lytic action creates space within the PG sacculus to allow for its expansion as well as for the insertion of various structures such as secretion systems and flagella.</text>
</comment>
<comment type="catalytic activity">
    <reaction evidence="1">
        <text>Exolytic cleavage of the (1-&gt;4)-beta-glycosidic linkage between N-acetylmuramic acid (MurNAc) and N-acetylglucosamine (GlcNAc) residues in peptidoglycan, from either the reducing or the non-reducing ends of the peptidoglycan chains, with concomitant formation of a 1,6-anhydrobond in the MurNAc residue.</text>
        <dbReference type="EC" id="4.2.2.n1"/>
    </reaction>
</comment>
<comment type="subcellular location">
    <subcellularLocation>
        <location>Cell outer membrane</location>
        <topology>Peripheral membrane protein</topology>
    </subcellularLocation>
    <text evidence="1">Attached to the inner leaflet of the outer membrane.</text>
</comment>
<comment type="domain">
    <text evidence="1">The N-terminal domain does not have lytic activity and probably modulates enzymatic activity. The C-terminal domain is the catalytic active domain.</text>
</comment>
<comment type="similarity">
    <text evidence="1">In the N-terminal section; belongs to the bacterial solute-binding protein 3 family.</text>
</comment>
<comment type="similarity">
    <text evidence="1">In the C-terminal section; belongs to the transglycosylase Slt family.</text>
</comment>
<sequence>MPIFSTRVLTYLRCIFRLFIGLTLLLTLVGCDFYTPSSQLEQIRQRGEIRVGTIYGPTSYYQRDDTAQGFDYELAQSYADWLGVKLTIVPVYSTAELVELLRKGKLDLAAAAIVVTPERRQLFRFGPGFYQVSPKLVYRNGSPKPKDIGDLKGNIVVPAGSTGEDLLKELAKQYPNLKWSTNRDADVEELLKQVADGKIDYTVVQDTVLARTQRYYPELTEGMTLAKNQTVAWAMTKLPDDSLYASIIDFFGQRFMDGAIAKLDEKYFGHVQNFDFVDTRTFLQRAKSLLPKYQDLFKTHANVVDWRLLAAISYQESHWDPEARSYTGVRGMMMLTEPTAKAMGVNNRLHPEESIKGGARYLEQMMEKVPASVPDDEKVWFALTAYNIGYGHMMDARRLTKELGKNPDAWSDVKEVLPLLQQSRWHRKVRYGYARGGEARNYVNNVRQYYQSLLWLDNEQQKAHRREELDDDDSSEPPSAERPTVIAEVVKQITLR</sequence>
<keyword id="KW-0998">Cell outer membrane</keyword>
<keyword id="KW-0961">Cell wall biogenesis/degradation</keyword>
<keyword id="KW-0456">Lyase</keyword>
<keyword id="KW-0472">Membrane</keyword>
<keyword id="KW-1185">Reference proteome</keyword>
<keyword id="KW-0732">Signal</keyword>
<protein>
    <recommendedName>
        <fullName evidence="1">Membrane-bound lytic murein transglycosylase F</fullName>
        <ecNumber evidence="1">4.2.2.n1</ecNumber>
    </recommendedName>
    <alternativeName>
        <fullName evidence="1">Murein lyase F</fullName>
    </alternativeName>
</protein>